<gene>
    <name evidence="1" type="primary">rhlB</name>
    <name type="ordered locus">ECIAI1_3966</name>
</gene>
<accession>B7M5C7</accession>
<keyword id="KW-0067">ATP-binding</keyword>
<keyword id="KW-0963">Cytoplasm</keyword>
<keyword id="KW-0347">Helicase</keyword>
<keyword id="KW-0378">Hydrolase</keyword>
<keyword id="KW-0547">Nucleotide-binding</keyword>
<keyword id="KW-0694">RNA-binding</keyword>
<evidence type="ECO:0000255" key="1">
    <source>
        <dbReference type="HAMAP-Rule" id="MF_00661"/>
    </source>
</evidence>
<evidence type="ECO:0000256" key="2">
    <source>
        <dbReference type="SAM" id="MobiDB-lite"/>
    </source>
</evidence>
<feature type="chain" id="PRO_1000131289" description="ATP-dependent RNA helicase RhlB">
    <location>
        <begin position="1"/>
        <end position="421"/>
    </location>
</feature>
<feature type="domain" description="Helicase ATP-binding" evidence="1">
    <location>
        <begin position="40"/>
        <end position="219"/>
    </location>
</feature>
<feature type="domain" description="Helicase C-terminal" evidence="1">
    <location>
        <begin position="245"/>
        <end position="390"/>
    </location>
</feature>
<feature type="region of interest" description="Disordered" evidence="2">
    <location>
        <begin position="392"/>
        <end position="421"/>
    </location>
</feature>
<feature type="short sequence motif" description="Q motif">
    <location>
        <begin position="9"/>
        <end position="37"/>
    </location>
</feature>
<feature type="short sequence motif" description="DEAD box">
    <location>
        <begin position="165"/>
        <end position="168"/>
    </location>
</feature>
<feature type="compositionally biased region" description="Low complexity" evidence="2">
    <location>
        <begin position="402"/>
        <end position="414"/>
    </location>
</feature>
<feature type="binding site" evidence="1">
    <location>
        <begin position="53"/>
        <end position="60"/>
    </location>
    <ligand>
        <name>ATP</name>
        <dbReference type="ChEBI" id="CHEBI:30616"/>
    </ligand>
</feature>
<comment type="function">
    <text evidence="1">DEAD-box RNA helicase involved in RNA degradation. Has RNA-dependent ATPase activity and unwinds double-stranded RNA.</text>
</comment>
<comment type="catalytic activity">
    <reaction evidence="1">
        <text>ATP + H2O = ADP + phosphate + H(+)</text>
        <dbReference type="Rhea" id="RHEA:13065"/>
        <dbReference type="ChEBI" id="CHEBI:15377"/>
        <dbReference type="ChEBI" id="CHEBI:15378"/>
        <dbReference type="ChEBI" id="CHEBI:30616"/>
        <dbReference type="ChEBI" id="CHEBI:43474"/>
        <dbReference type="ChEBI" id="CHEBI:456216"/>
        <dbReference type="EC" id="3.6.4.13"/>
    </reaction>
</comment>
<comment type="subunit">
    <text evidence="1">Component of the RNA degradosome, which is a multiprotein complex involved in RNA processing and mRNA degradation.</text>
</comment>
<comment type="subcellular location">
    <subcellularLocation>
        <location evidence="1">Cytoplasm</location>
    </subcellularLocation>
</comment>
<comment type="similarity">
    <text evidence="1">Belongs to the DEAD box helicase family. RhlB subfamily.</text>
</comment>
<sequence length="421" mass="47126">MSKTHLTEQKFSDFALHPKVVEALEKKGFHNCTPIQALALPLTLAGRDVAGQAQTGTGKTMAFLTSTFHYLLSHPAIADRKVNQPRALIMAPTRELAVQIHADAEPLAEATGLKLGLAYGGDGYDKQLKVLESGVDILIGTTGRLIDYAKQNHINLGAIQVVVLDEADRMYDLGFIKDIRWLFRRMPPANQRLNMLFSATLSYRVRELAFEQMNNAEYIEVEPEQKTGHRIKEELFYPSNEEKMRLLQTLIEEEWPDRAIIFANTKHRCEEIWGHLAADGHRVGLLTGDVAQKKRLRILDEFTRGDLDILVATDVAARGLHIPAVTHVFNYDLPDDCEDYVHRIGRTGRAGASGHSISLACEEYALNLPAIETYIGHSIPVSKYNPDALMTDLPKPLRLTRPRTGNGPRRTGAPRNRRRSG</sequence>
<protein>
    <recommendedName>
        <fullName evidence="1">ATP-dependent RNA helicase RhlB</fullName>
        <ecNumber evidence="1">3.6.4.13</ecNumber>
    </recommendedName>
</protein>
<organism>
    <name type="scientific">Escherichia coli O8 (strain IAI1)</name>
    <dbReference type="NCBI Taxonomy" id="585034"/>
    <lineage>
        <taxon>Bacteria</taxon>
        <taxon>Pseudomonadati</taxon>
        <taxon>Pseudomonadota</taxon>
        <taxon>Gammaproteobacteria</taxon>
        <taxon>Enterobacterales</taxon>
        <taxon>Enterobacteriaceae</taxon>
        <taxon>Escherichia</taxon>
    </lineage>
</organism>
<dbReference type="EC" id="3.6.4.13" evidence="1"/>
<dbReference type="EMBL" id="CU928160">
    <property type="protein sequence ID" value="CAR00751.1"/>
    <property type="molecule type" value="Genomic_DNA"/>
</dbReference>
<dbReference type="RefSeq" id="WP_000047499.1">
    <property type="nucleotide sequence ID" value="NC_011741.1"/>
</dbReference>
<dbReference type="SMR" id="B7M5C7"/>
<dbReference type="GeneID" id="93778164"/>
<dbReference type="KEGG" id="ecr:ECIAI1_3966"/>
<dbReference type="HOGENOM" id="CLU_003041_1_3_6"/>
<dbReference type="GO" id="GO:0005829">
    <property type="term" value="C:cytosol"/>
    <property type="evidence" value="ECO:0007669"/>
    <property type="project" value="TreeGrafter"/>
</dbReference>
<dbReference type="GO" id="GO:0005524">
    <property type="term" value="F:ATP binding"/>
    <property type="evidence" value="ECO:0007669"/>
    <property type="project" value="UniProtKB-UniRule"/>
</dbReference>
<dbReference type="GO" id="GO:0016887">
    <property type="term" value="F:ATP hydrolysis activity"/>
    <property type="evidence" value="ECO:0007669"/>
    <property type="project" value="RHEA"/>
</dbReference>
<dbReference type="GO" id="GO:0003723">
    <property type="term" value="F:RNA binding"/>
    <property type="evidence" value="ECO:0007669"/>
    <property type="project" value="UniProtKB-UniRule"/>
</dbReference>
<dbReference type="GO" id="GO:0003724">
    <property type="term" value="F:RNA helicase activity"/>
    <property type="evidence" value="ECO:0007669"/>
    <property type="project" value="UniProtKB-UniRule"/>
</dbReference>
<dbReference type="GO" id="GO:0006401">
    <property type="term" value="P:RNA catabolic process"/>
    <property type="evidence" value="ECO:0007669"/>
    <property type="project" value="UniProtKB-UniRule"/>
</dbReference>
<dbReference type="CDD" id="cd00268">
    <property type="entry name" value="DEADc"/>
    <property type="match status" value="1"/>
</dbReference>
<dbReference type="CDD" id="cd18787">
    <property type="entry name" value="SF2_C_DEAD"/>
    <property type="match status" value="1"/>
</dbReference>
<dbReference type="FunFam" id="3.40.50.300:FF:000008">
    <property type="entry name" value="ATP-dependent RNA helicase RhlB"/>
    <property type="match status" value="1"/>
</dbReference>
<dbReference type="FunFam" id="3.40.50.300:FF:000312">
    <property type="entry name" value="ATP-dependent RNA helicase RhlB"/>
    <property type="match status" value="1"/>
</dbReference>
<dbReference type="Gene3D" id="3.40.50.300">
    <property type="entry name" value="P-loop containing nucleotide triphosphate hydrolases"/>
    <property type="match status" value="2"/>
</dbReference>
<dbReference type="HAMAP" id="MF_00661">
    <property type="entry name" value="DEAD_helicase_RhlB"/>
    <property type="match status" value="1"/>
</dbReference>
<dbReference type="InterPro" id="IPR011545">
    <property type="entry name" value="DEAD/DEAH_box_helicase_dom"/>
</dbReference>
<dbReference type="InterPro" id="IPR050079">
    <property type="entry name" value="DEAD_box_RNA_helicase"/>
</dbReference>
<dbReference type="InterPro" id="IPR014001">
    <property type="entry name" value="Helicase_ATP-bd"/>
</dbReference>
<dbReference type="InterPro" id="IPR001650">
    <property type="entry name" value="Helicase_C-like"/>
</dbReference>
<dbReference type="InterPro" id="IPR027417">
    <property type="entry name" value="P-loop_NTPase"/>
</dbReference>
<dbReference type="InterPro" id="IPR000629">
    <property type="entry name" value="RNA-helicase_DEAD-box_CS"/>
</dbReference>
<dbReference type="InterPro" id="IPR023554">
    <property type="entry name" value="RNA_helicase_ATP-dep_RhlB"/>
</dbReference>
<dbReference type="InterPro" id="IPR014014">
    <property type="entry name" value="RNA_helicase_DEAD_Q_motif"/>
</dbReference>
<dbReference type="NCBIfam" id="NF003419">
    <property type="entry name" value="PRK04837.1"/>
    <property type="match status" value="1"/>
</dbReference>
<dbReference type="PANTHER" id="PTHR47959:SF10">
    <property type="entry name" value="ATP-DEPENDENT RNA HELICASE RHLB"/>
    <property type="match status" value="1"/>
</dbReference>
<dbReference type="PANTHER" id="PTHR47959">
    <property type="entry name" value="ATP-DEPENDENT RNA HELICASE RHLE-RELATED"/>
    <property type="match status" value="1"/>
</dbReference>
<dbReference type="Pfam" id="PF00270">
    <property type="entry name" value="DEAD"/>
    <property type="match status" value="1"/>
</dbReference>
<dbReference type="Pfam" id="PF00271">
    <property type="entry name" value="Helicase_C"/>
    <property type="match status" value="1"/>
</dbReference>
<dbReference type="SMART" id="SM00487">
    <property type="entry name" value="DEXDc"/>
    <property type="match status" value="1"/>
</dbReference>
<dbReference type="SMART" id="SM00490">
    <property type="entry name" value="HELICc"/>
    <property type="match status" value="1"/>
</dbReference>
<dbReference type="SUPFAM" id="SSF52540">
    <property type="entry name" value="P-loop containing nucleoside triphosphate hydrolases"/>
    <property type="match status" value="1"/>
</dbReference>
<dbReference type="PROSITE" id="PS00039">
    <property type="entry name" value="DEAD_ATP_HELICASE"/>
    <property type="match status" value="1"/>
</dbReference>
<dbReference type="PROSITE" id="PS51192">
    <property type="entry name" value="HELICASE_ATP_BIND_1"/>
    <property type="match status" value="1"/>
</dbReference>
<dbReference type="PROSITE" id="PS51194">
    <property type="entry name" value="HELICASE_CTER"/>
    <property type="match status" value="1"/>
</dbReference>
<dbReference type="PROSITE" id="PS51195">
    <property type="entry name" value="Q_MOTIF"/>
    <property type="match status" value="1"/>
</dbReference>
<reference key="1">
    <citation type="journal article" date="2009" name="PLoS Genet.">
        <title>Organised genome dynamics in the Escherichia coli species results in highly diverse adaptive paths.</title>
        <authorList>
            <person name="Touchon M."/>
            <person name="Hoede C."/>
            <person name="Tenaillon O."/>
            <person name="Barbe V."/>
            <person name="Baeriswyl S."/>
            <person name="Bidet P."/>
            <person name="Bingen E."/>
            <person name="Bonacorsi S."/>
            <person name="Bouchier C."/>
            <person name="Bouvet O."/>
            <person name="Calteau A."/>
            <person name="Chiapello H."/>
            <person name="Clermont O."/>
            <person name="Cruveiller S."/>
            <person name="Danchin A."/>
            <person name="Diard M."/>
            <person name="Dossat C."/>
            <person name="Karoui M.E."/>
            <person name="Frapy E."/>
            <person name="Garry L."/>
            <person name="Ghigo J.M."/>
            <person name="Gilles A.M."/>
            <person name="Johnson J."/>
            <person name="Le Bouguenec C."/>
            <person name="Lescat M."/>
            <person name="Mangenot S."/>
            <person name="Martinez-Jehanne V."/>
            <person name="Matic I."/>
            <person name="Nassif X."/>
            <person name="Oztas S."/>
            <person name="Petit M.A."/>
            <person name="Pichon C."/>
            <person name="Rouy Z."/>
            <person name="Ruf C.S."/>
            <person name="Schneider D."/>
            <person name="Tourret J."/>
            <person name="Vacherie B."/>
            <person name="Vallenet D."/>
            <person name="Medigue C."/>
            <person name="Rocha E.P.C."/>
            <person name="Denamur E."/>
        </authorList>
    </citation>
    <scope>NUCLEOTIDE SEQUENCE [LARGE SCALE GENOMIC DNA]</scope>
    <source>
        <strain>IAI1</strain>
    </source>
</reference>
<proteinExistence type="inferred from homology"/>
<name>RHLB_ECO8A</name>